<comment type="function">
    <text evidence="1">Catalyzes the conversion of 3'-phosphate to a 2',3'-cyclic phosphodiester at the end of RNA. The mechanism of action of the enzyme occurs in 3 steps: (A) adenylation of the enzyme by ATP; (B) transfer of adenylate to an RNA-N3'P to produce RNA-N3'PP5'A; (C) and attack of the adjacent 2'-hydroxyl on the 3'-phosphorus in the diester linkage to produce the cyclic end product. The biological role of this enzyme is unknown but it is likely to function in some aspects of cellular RNA processing (By similarity).</text>
</comment>
<comment type="catalytic activity">
    <reaction>
        <text>a 3'-end 3'-phospho-ribonucleotide-RNA + ATP = a 3'-end 2',3'-cyclophospho-ribonucleotide-RNA + AMP + diphosphate</text>
        <dbReference type="Rhea" id="RHEA:23976"/>
        <dbReference type="Rhea" id="RHEA-COMP:10463"/>
        <dbReference type="Rhea" id="RHEA-COMP:10464"/>
        <dbReference type="ChEBI" id="CHEBI:30616"/>
        <dbReference type="ChEBI" id="CHEBI:33019"/>
        <dbReference type="ChEBI" id="CHEBI:83062"/>
        <dbReference type="ChEBI" id="CHEBI:83064"/>
        <dbReference type="ChEBI" id="CHEBI:456215"/>
        <dbReference type="EC" id="6.5.1.4"/>
    </reaction>
</comment>
<comment type="subcellular location">
    <subcellularLocation>
        <location evidence="1">Nucleus</location>
        <location evidence="1">Nucleoplasm</location>
    </subcellularLocation>
</comment>
<comment type="similarity">
    <text evidence="3">Belongs to the RNA 3'-terminal cyclase family. Type 1 subfamily.</text>
</comment>
<accession>O15746</accession>
<accession>Q552F0</accession>
<accession>Q75JH2</accession>
<name>RTCA_DICDI</name>
<gene>
    <name type="primary">rtca</name>
    <name type="synonym">R2037</name>
    <name type="synonym">rtc1</name>
    <name type="ORF">DDB_G0276159</name>
</gene>
<proteinExistence type="inferred from homology"/>
<sequence length="433" mass="47111">MGKNKNYNKNQFKKSKTNNDTTVAQQQQTIEEKPDFKIDGSILEGGGQILRNSVALASLFNKAISIEKIRYNRDQPGLKNQHKAGIDLMSRLFKAHLTGCSVGSCKLYYQPTQKTIQDDGVIEADTKTAGSICLMIQVSLPCLIFAPHSTKMVLGGGTNCDFAPAADYIQNVFLPIATTMGFKCEMSIDKRGFYPKGGGAVTLTTQPLTQPLSPITIVNKGEVNRIVIKSYFTSPRISPLVAERMNNTAKKLIKKDFKKVDVETELIDVSKFSFGDGTFIEIRAYTDQGCIFGATGNGAIGVPAEKVAEDAANSLLKDLQDGGCMDEYLQDQLIIFMALAKGKSQIKTGPISLHTQTSIHITSLMTGAIFTITPLTNNTQSGEETNLITCEGISYFPSDLNNNNNNSNSNTTTTTTTTTISTTTIDNQNSEEK</sequence>
<dbReference type="EC" id="6.5.1.4"/>
<dbReference type="EMBL" id="AF020279">
    <property type="protein sequence ID" value="AAB70847.1"/>
    <property type="molecule type" value="Genomic_DNA"/>
</dbReference>
<dbReference type="EMBL" id="AAFI02000014">
    <property type="protein sequence ID" value="EAL69379.1"/>
    <property type="molecule type" value="Genomic_DNA"/>
</dbReference>
<dbReference type="RefSeq" id="XP_643263.1">
    <property type="nucleotide sequence ID" value="XM_638171.1"/>
</dbReference>
<dbReference type="SMR" id="O15746"/>
<dbReference type="FunCoup" id="O15746">
    <property type="interactions" value="404"/>
</dbReference>
<dbReference type="STRING" id="44689.O15746"/>
<dbReference type="PaxDb" id="44689-DDB0185053"/>
<dbReference type="EnsemblProtists" id="EAL69379">
    <property type="protein sequence ID" value="EAL69379"/>
    <property type="gene ID" value="DDB_G0276159"/>
</dbReference>
<dbReference type="GeneID" id="8620306"/>
<dbReference type="KEGG" id="ddi:DDB_G0276159"/>
<dbReference type="dictyBase" id="DDB_G0276159">
    <property type="gene designation" value="rtc1"/>
</dbReference>
<dbReference type="VEuPathDB" id="AmoebaDB:DDB_G0276159"/>
<dbReference type="eggNOG" id="KOG3980">
    <property type="taxonomic scope" value="Eukaryota"/>
</dbReference>
<dbReference type="HOGENOM" id="CLU_027882_0_1_1"/>
<dbReference type="InParanoid" id="O15746"/>
<dbReference type="OMA" id="WSPPIDY"/>
<dbReference type="PhylomeDB" id="O15746"/>
<dbReference type="PRO" id="PR:O15746"/>
<dbReference type="Proteomes" id="UP000002195">
    <property type="component" value="Chromosome 2"/>
</dbReference>
<dbReference type="GO" id="GO:0005654">
    <property type="term" value="C:nucleoplasm"/>
    <property type="evidence" value="ECO:0007669"/>
    <property type="project" value="UniProtKB-SubCell"/>
</dbReference>
<dbReference type="GO" id="GO:0005634">
    <property type="term" value="C:nucleus"/>
    <property type="evidence" value="ECO:0000318"/>
    <property type="project" value="GO_Central"/>
</dbReference>
<dbReference type="GO" id="GO:0005524">
    <property type="term" value="F:ATP binding"/>
    <property type="evidence" value="ECO:0007669"/>
    <property type="project" value="UniProtKB-KW"/>
</dbReference>
<dbReference type="GO" id="GO:0003963">
    <property type="term" value="F:RNA-3'-phosphate cyclase activity"/>
    <property type="evidence" value="ECO:0000318"/>
    <property type="project" value="GO_Central"/>
</dbReference>
<dbReference type="GO" id="GO:0006396">
    <property type="term" value="P:RNA processing"/>
    <property type="evidence" value="ECO:0007669"/>
    <property type="project" value="InterPro"/>
</dbReference>
<dbReference type="CDD" id="cd00874">
    <property type="entry name" value="RNA_Cyclase_Class_II"/>
    <property type="match status" value="1"/>
</dbReference>
<dbReference type="Gene3D" id="3.65.10.20">
    <property type="entry name" value="RNA 3'-terminal phosphate cyclase domain"/>
    <property type="match status" value="1"/>
</dbReference>
<dbReference type="Gene3D" id="3.30.360.20">
    <property type="entry name" value="RNA 3'-terminal phosphate cyclase, insert domain"/>
    <property type="match status" value="1"/>
</dbReference>
<dbReference type="HAMAP" id="MF_00200">
    <property type="entry name" value="RTC"/>
    <property type="match status" value="1"/>
</dbReference>
<dbReference type="InterPro" id="IPR013791">
    <property type="entry name" value="RNA3'-term_phos_cycl_insert"/>
</dbReference>
<dbReference type="InterPro" id="IPR023797">
    <property type="entry name" value="RNA3'_phos_cyclase_dom"/>
</dbReference>
<dbReference type="InterPro" id="IPR037136">
    <property type="entry name" value="RNA3'_phos_cyclase_dom_sf"/>
</dbReference>
<dbReference type="InterPro" id="IPR000228">
    <property type="entry name" value="RNA3'_term_phos_cyc"/>
</dbReference>
<dbReference type="InterPro" id="IPR017770">
    <property type="entry name" value="RNA3'_term_phos_cyc_type_1"/>
</dbReference>
<dbReference type="InterPro" id="IPR020719">
    <property type="entry name" value="RNA3'_term_phos_cycl-like_CS"/>
</dbReference>
<dbReference type="InterPro" id="IPR013792">
    <property type="entry name" value="RNA3'P_cycl/enolpyr_Trfase_a/b"/>
</dbReference>
<dbReference type="InterPro" id="IPR036553">
    <property type="entry name" value="RPTC_insert"/>
</dbReference>
<dbReference type="NCBIfam" id="TIGR03399">
    <property type="entry name" value="RNA_3prim_cycl"/>
    <property type="match status" value="1"/>
</dbReference>
<dbReference type="PANTHER" id="PTHR11096">
    <property type="entry name" value="RNA 3' TERMINAL PHOSPHATE CYCLASE"/>
    <property type="match status" value="1"/>
</dbReference>
<dbReference type="PANTHER" id="PTHR11096:SF0">
    <property type="entry name" value="RNA 3'-TERMINAL PHOSPHATE CYCLASE"/>
    <property type="match status" value="1"/>
</dbReference>
<dbReference type="Pfam" id="PF01137">
    <property type="entry name" value="RTC"/>
    <property type="match status" value="1"/>
</dbReference>
<dbReference type="Pfam" id="PF05189">
    <property type="entry name" value="RTC_insert"/>
    <property type="match status" value="1"/>
</dbReference>
<dbReference type="SUPFAM" id="SSF55205">
    <property type="entry name" value="EPT/RTPC-like"/>
    <property type="match status" value="2"/>
</dbReference>
<dbReference type="SUPFAM" id="SSF52913">
    <property type="entry name" value="RNA 3'-terminal phosphate cyclase, RPTC, insert domain"/>
    <property type="match status" value="1"/>
</dbReference>
<dbReference type="PROSITE" id="PS01287">
    <property type="entry name" value="RTC"/>
    <property type="match status" value="1"/>
</dbReference>
<protein>
    <recommendedName>
        <fullName>Probable RNA 3'-terminal phosphate cyclase</fullName>
        <shortName>RNA cyclase</shortName>
        <shortName>RNA-3'-phosphate cyclase</shortName>
        <ecNumber>6.5.1.4</ecNumber>
    </recommendedName>
</protein>
<organism>
    <name type="scientific">Dictyostelium discoideum</name>
    <name type="common">Social amoeba</name>
    <dbReference type="NCBI Taxonomy" id="44689"/>
    <lineage>
        <taxon>Eukaryota</taxon>
        <taxon>Amoebozoa</taxon>
        <taxon>Evosea</taxon>
        <taxon>Eumycetozoa</taxon>
        <taxon>Dictyostelia</taxon>
        <taxon>Dictyosteliales</taxon>
        <taxon>Dictyosteliaceae</taxon>
        <taxon>Dictyostelium</taxon>
    </lineage>
</organism>
<feature type="chain" id="PRO_0000156413" description="Probable RNA 3'-terminal phosphate cyclase">
    <location>
        <begin position="1"/>
        <end position="433"/>
    </location>
</feature>
<feature type="region of interest" description="Disordered" evidence="2">
    <location>
        <begin position="1"/>
        <end position="28"/>
    </location>
</feature>
<feature type="region of interest" description="Disordered" evidence="2">
    <location>
        <begin position="400"/>
        <end position="433"/>
    </location>
</feature>
<feature type="compositionally biased region" description="Low complexity" evidence="2">
    <location>
        <begin position="1"/>
        <end position="10"/>
    </location>
</feature>
<feature type="compositionally biased region" description="Polar residues" evidence="2">
    <location>
        <begin position="18"/>
        <end position="28"/>
    </location>
</feature>
<feature type="compositionally biased region" description="Low complexity" evidence="2">
    <location>
        <begin position="401"/>
        <end position="425"/>
    </location>
</feature>
<feature type="active site" description="Tele-AMP-histidine intermediate" evidence="1">
    <location>
        <position position="354"/>
    </location>
</feature>
<feature type="binding site" evidence="1">
    <location>
        <position position="137"/>
    </location>
    <ligand>
        <name>ATP</name>
        <dbReference type="ChEBI" id="CHEBI:30616"/>
    </ligand>
</feature>
<feature type="binding site" evidence="1">
    <location>
        <begin position="328"/>
        <end position="332"/>
    </location>
    <ligand>
        <name>ATP</name>
        <dbReference type="ChEBI" id="CHEBI:30616"/>
    </ligand>
</feature>
<keyword id="KW-0067">ATP-binding</keyword>
<keyword id="KW-0436">Ligase</keyword>
<keyword id="KW-0547">Nucleotide-binding</keyword>
<keyword id="KW-0539">Nucleus</keyword>
<keyword id="KW-1185">Reference proteome</keyword>
<reference key="1">
    <citation type="submission" date="1997-08" db="EMBL/GenBank/DDBJ databases">
        <authorList>
            <person name="Loomis W.F."/>
            <person name="Iranfar N."/>
        </authorList>
    </citation>
    <scope>NUCLEOTIDE SEQUENCE [GENOMIC DNA]</scope>
    <source>
        <strain>AX3</strain>
    </source>
</reference>
<reference key="2">
    <citation type="journal article" date="2002" name="Nature">
        <title>Sequence and analysis of chromosome 2 of Dictyostelium discoideum.</title>
        <authorList>
            <person name="Gloeckner G."/>
            <person name="Eichinger L."/>
            <person name="Szafranski K."/>
            <person name="Pachebat J.A."/>
            <person name="Bankier A.T."/>
            <person name="Dear P.H."/>
            <person name="Lehmann R."/>
            <person name="Baumgart C."/>
            <person name="Parra G."/>
            <person name="Abril J.F."/>
            <person name="Guigo R."/>
            <person name="Kumpf K."/>
            <person name="Tunggal B."/>
            <person name="Cox E.C."/>
            <person name="Quail M.A."/>
            <person name="Platzer M."/>
            <person name="Rosenthal A."/>
            <person name="Noegel A.A."/>
        </authorList>
    </citation>
    <scope>NUCLEOTIDE SEQUENCE [LARGE SCALE GENOMIC DNA]</scope>
    <source>
        <strain>AX4</strain>
    </source>
</reference>
<reference key="3">
    <citation type="journal article" date="2005" name="Nature">
        <title>The genome of the social amoeba Dictyostelium discoideum.</title>
        <authorList>
            <person name="Eichinger L."/>
            <person name="Pachebat J.A."/>
            <person name="Gloeckner G."/>
            <person name="Rajandream M.A."/>
            <person name="Sucgang R."/>
            <person name="Berriman M."/>
            <person name="Song J."/>
            <person name="Olsen R."/>
            <person name="Szafranski K."/>
            <person name="Xu Q."/>
            <person name="Tunggal B."/>
            <person name="Kummerfeld S."/>
            <person name="Madera M."/>
            <person name="Konfortov B.A."/>
            <person name="Rivero F."/>
            <person name="Bankier A.T."/>
            <person name="Lehmann R."/>
            <person name="Hamlin N."/>
            <person name="Davies R."/>
            <person name="Gaudet P."/>
            <person name="Fey P."/>
            <person name="Pilcher K."/>
            <person name="Chen G."/>
            <person name="Saunders D."/>
            <person name="Sodergren E.J."/>
            <person name="Davis P."/>
            <person name="Kerhornou A."/>
            <person name="Nie X."/>
            <person name="Hall N."/>
            <person name="Anjard C."/>
            <person name="Hemphill L."/>
            <person name="Bason N."/>
            <person name="Farbrother P."/>
            <person name="Desany B."/>
            <person name="Just E."/>
            <person name="Morio T."/>
            <person name="Rost R."/>
            <person name="Churcher C.M."/>
            <person name="Cooper J."/>
            <person name="Haydock S."/>
            <person name="van Driessche N."/>
            <person name="Cronin A."/>
            <person name="Goodhead I."/>
            <person name="Muzny D.M."/>
            <person name="Mourier T."/>
            <person name="Pain A."/>
            <person name="Lu M."/>
            <person name="Harper D."/>
            <person name="Lindsay R."/>
            <person name="Hauser H."/>
            <person name="James K.D."/>
            <person name="Quiles M."/>
            <person name="Madan Babu M."/>
            <person name="Saito T."/>
            <person name="Buchrieser C."/>
            <person name="Wardroper A."/>
            <person name="Felder M."/>
            <person name="Thangavelu M."/>
            <person name="Johnson D."/>
            <person name="Knights A."/>
            <person name="Loulseged H."/>
            <person name="Mungall K.L."/>
            <person name="Oliver K."/>
            <person name="Price C."/>
            <person name="Quail M.A."/>
            <person name="Urushihara H."/>
            <person name="Hernandez J."/>
            <person name="Rabbinowitsch E."/>
            <person name="Steffen D."/>
            <person name="Sanders M."/>
            <person name="Ma J."/>
            <person name="Kohara Y."/>
            <person name="Sharp S."/>
            <person name="Simmonds M.N."/>
            <person name="Spiegler S."/>
            <person name="Tivey A."/>
            <person name="Sugano S."/>
            <person name="White B."/>
            <person name="Walker D."/>
            <person name="Woodward J.R."/>
            <person name="Winckler T."/>
            <person name="Tanaka Y."/>
            <person name="Shaulsky G."/>
            <person name="Schleicher M."/>
            <person name="Weinstock G.M."/>
            <person name="Rosenthal A."/>
            <person name="Cox E.C."/>
            <person name="Chisholm R.L."/>
            <person name="Gibbs R.A."/>
            <person name="Loomis W.F."/>
            <person name="Platzer M."/>
            <person name="Kay R.R."/>
            <person name="Williams J.G."/>
            <person name="Dear P.H."/>
            <person name="Noegel A.A."/>
            <person name="Barrell B.G."/>
            <person name="Kuspa A."/>
        </authorList>
    </citation>
    <scope>NUCLEOTIDE SEQUENCE [LARGE SCALE GENOMIC DNA]</scope>
    <source>
        <strain>AX4</strain>
    </source>
</reference>
<evidence type="ECO:0000250" key="1"/>
<evidence type="ECO:0000256" key="2">
    <source>
        <dbReference type="SAM" id="MobiDB-lite"/>
    </source>
</evidence>
<evidence type="ECO:0000305" key="3"/>